<evidence type="ECO:0000255" key="1">
    <source>
        <dbReference type="HAMAP-Rule" id="MF_01343"/>
    </source>
</evidence>
<evidence type="ECO:0000305" key="2"/>
<protein>
    <recommendedName>
        <fullName evidence="1">Small ribosomal subunit protein uS15</fullName>
    </recommendedName>
    <alternativeName>
        <fullName evidence="2">30S ribosomal protein S15</fullName>
    </alternativeName>
</protein>
<name>RS15_CHLPD</name>
<comment type="function">
    <text evidence="1">One of the primary rRNA binding proteins, it binds directly to 16S rRNA where it helps nucleate assembly of the platform of the 30S subunit by binding and bridging several RNA helices of the 16S rRNA.</text>
</comment>
<comment type="function">
    <text evidence="1">Forms an intersubunit bridge (bridge B4) with the 23S rRNA of the 50S subunit in the ribosome.</text>
</comment>
<comment type="subunit">
    <text evidence="1">Part of the 30S ribosomal subunit. Forms a bridge to the 50S subunit in the 70S ribosome, contacting the 23S rRNA.</text>
</comment>
<comment type="similarity">
    <text evidence="1">Belongs to the universal ribosomal protein uS15 family.</text>
</comment>
<organism>
    <name type="scientific">Chlorobium phaeobacteroides (strain DSM 266 / SMG 266 / 2430)</name>
    <dbReference type="NCBI Taxonomy" id="290317"/>
    <lineage>
        <taxon>Bacteria</taxon>
        <taxon>Pseudomonadati</taxon>
        <taxon>Chlorobiota</taxon>
        <taxon>Chlorobiia</taxon>
        <taxon>Chlorobiales</taxon>
        <taxon>Chlorobiaceae</taxon>
        <taxon>Chlorobium/Pelodictyon group</taxon>
        <taxon>Chlorobium</taxon>
    </lineage>
</organism>
<reference key="1">
    <citation type="submission" date="2006-12" db="EMBL/GenBank/DDBJ databases">
        <title>Complete sequence of Chlorobium phaeobacteroides DSM 266.</title>
        <authorList>
            <consortium name="US DOE Joint Genome Institute"/>
            <person name="Copeland A."/>
            <person name="Lucas S."/>
            <person name="Lapidus A."/>
            <person name="Barry K."/>
            <person name="Detter J.C."/>
            <person name="Glavina del Rio T."/>
            <person name="Hammon N."/>
            <person name="Israni S."/>
            <person name="Pitluck S."/>
            <person name="Goltsman E."/>
            <person name="Schmutz J."/>
            <person name="Larimer F."/>
            <person name="Land M."/>
            <person name="Hauser L."/>
            <person name="Mikhailova N."/>
            <person name="Li T."/>
            <person name="Overmann J."/>
            <person name="Bryant D.A."/>
            <person name="Richardson P."/>
        </authorList>
    </citation>
    <scope>NUCLEOTIDE SEQUENCE [LARGE SCALE GENOMIC DNA]</scope>
    <source>
        <strain>DSM 266 / SMG 266 / 2430</strain>
    </source>
</reference>
<feature type="chain" id="PRO_1000054772" description="Small ribosomal subunit protein uS15">
    <location>
        <begin position="1"/>
        <end position="89"/>
    </location>
</feature>
<dbReference type="EMBL" id="CP000492">
    <property type="protein sequence ID" value="ABL64432.1"/>
    <property type="molecule type" value="Genomic_DNA"/>
</dbReference>
<dbReference type="RefSeq" id="WP_011744265.1">
    <property type="nucleotide sequence ID" value="NC_008639.1"/>
</dbReference>
<dbReference type="SMR" id="A1BDF5"/>
<dbReference type="STRING" id="290317.Cpha266_0373"/>
<dbReference type="KEGG" id="cph:Cpha266_0373"/>
<dbReference type="eggNOG" id="COG0184">
    <property type="taxonomic scope" value="Bacteria"/>
</dbReference>
<dbReference type="HOGENOM" id="CLU_148518_0_0_10"/>
<dbReference type="OrthoDB" id="9799262at2"/>
<dbReference type="Proteomes" id="UP000008701">
    <property type="component" value="Chromosome"/>
</dbReference>
<dbReference type="GO" id="GO:0022627">
    <property type="term" value="C:cytosolic small ribosomal subunit"/>
    <property type="evidence" value="ECO:0007669"/>
    <property type="project" value="TreeGrafter"/>
</dbReference>
<dbReference type="GO" id="GO:0019843">
    <property type="term" value="F:rRNA binding"/>
    <property type="evidence" value="ECO:0007669"/>
    <property type="project" value="UniProtKB-UniRule"/>
</dbReference>
<dbReference type="GO" id="GO:0003735">
    <property type="term" value="F:structural constituent of ribosome"/>
    <property type="evidence" value="ECO:0007669"/>
    <property type="project" value="InterPro"/>
</dbReference>
<dbReference type="GO" id="GO:0006412">
    <property type="term" value="P:translation"/>
    <property type="evidence" value="ECO:0007669"/>
    <property type="project" value="UniProtKB-UniRule"/>
</dbReference>
<dbReference type="CDD" id="cd00353">
    <property type="entry name" value="Ribosomal_S15p_S13e"/>
    <property type="match status" value="1"/>
</dbReference>
<dbReference type="FunFam" id="1.10.287.10:FF:000002">
    <property type="entry name" value="30S ribosomal protein S15"/>
    <property type="match status" value="1"/>
</dbReference>
<dbReference type="Gene3D" id="6.10.250.3130">
    <property type="match status" value="1"/>
</dbReference>
<dbReference type="Gene3D" id="1.10.287.10">
    <property type="entry name" value="S15/NS1, RNA-binding"/>
    <property type="match status" value="1"/>
</dbReference>
<dbReference type="HAMAP" id="MF_01343_B">
    <property type="entry name" value="Ribosomal_uS15_B"/>
    <property type="match status" value="1"/>
</dbReference>
<dbReference type="InterPro" id="IPR000589">
    <property type="entry name" value="Ribosomal_uS15"/>
</dbReference>
<dbReference type="InterPro" id="IPR005290">
    <property type="entry name" value="Ribosomal_uS15_bac-type"/>
</dbReference>
<dbReference type="InterPro" id="IPR009068">
    <property type="entry name" value="uS15_NS1_RNA-bd_sf"/>
</dbReference>
<dbReference type="NCBIfam" id="TIGR00952">
    <property type="entry name" value="S15_bact"/>
    <property type="match status" value="1"/>
</dbReference>
<dbReference type="PANTHER" id="PTHR23321">
    <property type="entry name" value="RIBOSOMAL PROTEIN S15, BACTERIAL AND ORGANELLAR"/>
    <property type="match status" value="1"/>
</dbReference>
<dbReference type="PANTHER" id="PTHR23321:SF26">
    <property type="entry name" value="SMALL RIBOSOMAL SUBUNIT PROTEIN US15M"/>
    <property type="match status" value="1"/>
</dbReference>
<dbReference type="Pfam" id="PF00312">
    <property type="entry name" value="Ribosomal_S15"/>
    <property type="match status" value="1"/>
</dbReference>
<dbReference type="SMART" id="SM01387">
    <property type="entry name" value="Ribosomal_S15"/>
    <property type="match status" value="1"/>
</dbReference>
<dbReference type="SUPFAM" id="SSF47060">
    <property type="entry name" value="S15/NS1 RNA-binding domain"/>
    <property type="match status" value="1"/>
</dbReference>
<dbReference type="PROSITE" id="PS00362">
    <property type="entry name" value="RIBOSOMAL_S15"/>
    <property type="match status" value="1"/>
</dbReference>
<keyword id="KW-1185">Reference proteome</keyword>
<keyword id="KW-0687">Ribonucleoprotein</keyword>
<keyword id="KW-0689">Ribosomal protein</keyword>
<keyword id="KW-0694">RNA-binding</keyword>
<keyword id="KW-0699">rRNA-binding</keyword>
<accession>A1BDF5</accession>
<sequence>MSLTQEDKAGIISQFGGVQQNTGKAEVQVALFSRRITDLTGHLQQHPKDKHSRRGLLMLVGKRKKVLNYLKNVDIERYRTVIAELDLRK</sequence>
<gene>
    <name evidence="1" type="primary">rpsO</name>
    <name type="ordered locus">Cpha266_0373</name>
</gene>
<proteinExistence type="inferred from homology"/>